<gene>
    <name evidence="1" type="primary">rpmE</name>
    <name type="ordered locus">Plut_0349</name>
</gene>
<keyword id="KW-1185">Reference proteome</keyword>
<keyword id="KW-0687">Ribonucleoprotein</keyword>
<keyword id="KW-0689">Ribosomal protein</keyword>
<keyword id="KW-0694">RNA-binding</keyword>
<keyword id="KW-0699">rRNA-binding</keyword>
<sequence>MKSDIHPKYTEVTVVCANCGNSFETRSTRPSIKVDVCSNCHPFYTGKQTLVDTAGRVDRFNKRFAKSTASQAQAK</sequence>
<comment type="function">
    <text evidence="1">Binds the 23S rRNA.</text>
</comment>
<comment type="subunit">
    <text evidence="1">Part of the 50S ribosomal subunit.</text>
</comment>
<comment type="similarity">
    <text evidence="1">Belongs to the bacterial ribosomal protein bL31 family. Type A subfamily.</text>
</comment>
<protein>
    <recommendedName>
        <fullName evidence="1">Large ribosomal subunit protein bL31</fullName>
    </recommendedName>
    <alternativeName>
        <fullName evidence="2">50S ribosomal protein L31</fullName>
    </alternativeName>
</protein>
<feature type="chain" id="PRO_0000259206" description="Large ribosomal subunit protein bL31">
    <location>
        <begin position="1"/>
        <end position="75"/>
    </location>
</feature>
<organism>
    <name type="scientific">Chlorobium luteolum (strain DSM 273 / BCRC 81028 / 2530)</name>
    <name type="common">Pelodictyon luteolum</name>
    <dbReference type="NCBI Taxonomy" id="319225"/>
    <lineage>
        <taxon>Bacteria</taxon>
        <taxon>Pseudomonadati</taxon>
        <taxon>Chlorobiota</taxon>
        <taxon>Chlorobiia</taxon>
        <taxon>Chlorobiales</taxon>
        <taxon>Chlorobiaceae</taxon>
        <taxon>Chlorobium/Pelodictyon group</taxon>
        <taxon>Pelodictyon</taxon>
    </lineage>
</organism>
<dbReference type="EMBL" id="CP000096">
    <property type="protein sequence ID" value="ABB23237.1"/>
    <property type="molecule type" value="Genomic_DNA"/>
</dbReference>
<dbReference type="RefSeq" id="WP_011357112.1">
    <property type="nucleotide sequence ID" value="NC_007512.1"/>
</dbReference>
<dbReference type="SMR" id="Q3B5Z4"/>
<dbReference type="STRING" id="319225.Plut_0349"/>
<dbReference type="KEGG" id="plt:Plut_0349"/>
<dbReference type="eggNOG" id="COG0254">
    <property type="taxonomic scope" value="Bacteria"/>
</dbReference>
<dbReference type="HOGENOM" id="CLU_114306_4_3_10"/>
<dbReference type="OrthoDB" id="9803251at2"/>
<dbReference type="Proteomes" id="UP000002709">
    <property type="component" value="Chromosome"/>
</dbReference>
<dbReference type="GO" id="GO:1990904">
    <property type="term" value="C:ribonucleoprotein complex"/>
    <property type="evidence" value="ECO:0007669"/>
    <property type="project" value="UniProtKB-KW"/>
</dbReference>
<dbReference type="GO" id="GO:0005840">
    <property type="term" value="C:ribosome"/>
    <property type="evidence" value="ECO:0007669"/>
    <property type="project" value="UniProtKB-KW"/>
</dbReference>
<dbReference type="GO" id="GO:0019843">
    <property type="term" value="F:rRNA binding"/>
    <property type="evidence" value="ECO:0007669"/>
    <property type="project" value="UniProtKB-KW"/>
</dbReference>
<dbReference type="GO" id="GO:0003735">
    <property type="term" value="F:structural constituent of ribosome"/>
    <property type="evidence" value="ECO:0007669"/>
    <property type="project" value="InterPro"/>
</dbReference>
<dbReference type="GO" id="GO:0006412">
    <property type="term" value="P:translation"/>
    <property type="evidence" value="ECO:0007669"/>
    <property type="project" value="UniProtKB-UniRule"/>
</dbReference>
<dbReference type="Gene3D" id="4.10.830.30">
    <property type="entry name" value="Ribosomal protein L31"/>
    <property type="match status" value="1"/>
</dbReference>
<dbReference type="HAMAP" id="MF_00501">
    <property type="entry name" value="Ribosomal_bL31_1"/>
    <property type="match status" value="1"/>
</dbReference>
<dbReference type="InterPro" id="IPR034704">
    <property type="entry name" value="Ribosomal_bL28/bL31-like_sf"/>
</dbReference>
<dbReference type="InterPro" id="IPR002150">
    <property type="entry name" value="Ribosomal_bL31"/>
</dbReference>
<dbReference type="InterPro" id="IPR027491">
    <property type="entry name" value="Ribosomal_bL31_A"/>
</dbReference>
<dbReference type="InterPro" id="IPR042105">
    <property type="entry name" value="Ribosomal_bL31_sf"/>
</dbReference>
<dbReference type="NCBIfam" id="TIGR00105">
    <property type="entry name" value="L31"/>
    <property type="match status" value="1"/>
</dbReference>
<dbReference type="NCBIfam" id="NF000612">
    <property type="entry name" value="PRK00019.1"/>
    <property type="match status" value="1"/>
</dbReference>
<dbReference type="NCBIfam" id="NF001809">
    <property type="entry name" value="PRK00528.1"/>
    <property type="match status" value="1"/>
</dbReference>
<dbReference type="PANTHER" id="PTHR33280">
    <property type="entry name" value="50S RIBOSOMAL PROTEIN L31, CHLOROPLASTIC"/>
    <property type="match status" value="1"/>
</dbReference>
<dbReference type="PANTHER" id="PTHR33280:SF1">
    <property type="entry name" value="LARGE RIBOSOMAL SUBUNIT PROTEIN BL31C"/>
    <property type="match status" value="1"/>
</dbReference>
<dbReference type="Pfam" id="PF01197">
    <property type="entry name" value="Ribosomal_L31"/>
    <property type="match status" value="1"/>
</dbReference>
<dbReference type="PRINTS" id="PR01249">
    <property type="entry name" value="RIBOSOMALL31"/>
</dbReference>
<dbReference type="SUPFAM" id="SSF143800">
    <property type="entry name" value="L28p-like"/>
    <property type="match status" value="1"/>
</dbReference>
<dbReference type="PROSITE" id="PS01143">
    <property type="entry name" value="RIBOSOMAL_L31"/>
    <property type="match status" value="1"/>
</dbReference>
<name>RL31_CHLL3</name>
<accession>Q3B5Z4</accession>
<reference key="1">
    <citation type="submission" date="2005-08" db="EMBL/GenBank/DDBJ databases">
        <title>Complete sequence of Pelodictyon luteolum DSM 273.</title>
        <authorList>
            <consortium name="US DOE Joint Genome Institute"/>
            <person name="Copeland A."/>
            <person name="Lucas S."/>
            <person name="Lapidus A."/>
            <person name="Barry K."/>
            <person name="Detter J.C."/>
            <person name="Glavina T."/>
            <person name="Hammon N."/>
            <person name="Israni S."/>
            <person name="Pitluck S."/>
            <person name="Bryant D."/>
            <person name="Schmutz J."/>
            <person name="Larimer F."/>
            <person name="Land M."/>
            <person name="Kyrpides N."/>
            <person name="Ivanova N."/>
            <person name="Richardson P."/>
        </authorList>
    </citation>
    <scope>NUCLEOTIDE SEQUENCE [LARGE SCALE GENOMIC DNA]</scope>
    <source>
        <strain>DSM 273 / BCRC 81028 / 2530</strain>
    </source>
</reference>
<proteinExistence type="inferred from homology"/>
<evidence type="ECO:0000255" key="1">
    <source>
        <dbReference type="HAMAP-Rule" id="MF_00501"/>
    </source>
</evidence>
<evidence type="ECO:0000305" key="2"/>